<evidence type="ECO:0000250" key="1">
    <source>
        <dbReference type="UniProtKB" id="P00390"/>
    </source>
</evidence>
<evidence type="ECO:0000250" key="2">
    <source>
        <dbReference type="UniProtKB" id="P06715"/>
    </source>
</evidence>
<evidence type="ECO:0000305" key="3"/>
<gene>
    <name type="primary">gor</name>
    <name type="ordered locus">all4968</name>
</gene>
<keyword id="KW-0963">Cytoplasm</keyword>
<keyword id="KW-1015">Disulfide bond</keyword>
<keyword id="KW-0274">FAD</keyword>
<keyword id="KW-0285">Flavoprotein</keyword>
<keyword id="KW-0521">NADP</keyword>
<keyword id="KW-0560">Oxidoreductase</keyword>
<keyword id="KW-0676">Redox-active center</keyword>
<keyword id="KW-1185">Reference proteome</keyword>
<reference key="1">
    <citation type="journal article" date="1995" name="J. Biol. Chem.">
        <title>Cloning, sequencing, and regulation of the glutathione reductase gene from the cyanobacterium Anabaena PCC 7120.</title>
        <authorList>
            <person name="Jiang F."/>
            <person name="Hellman U."/>
            <person name="Sroga G.E."/>
            <person name="Bergman B."/>
            <person name="Mannervik B."/>
        </authorList>
    </citation>
    <scope>NUCLEOTIDE SEQUENCE [GENOMIC DNA]</scope>
</reference>
<reference key="2">
    <citation type="journal article" date="2001" name="DNA Res.">
        <title>Complete genomic sequence of the filamentous nitrogen-fixing cyanobacterium Anabaena sp. strain PCC 7120.</title>
        <authorList>
            <person name="Kaneko T."/>
            <person name="Nakamura Y."/>
            <person name="Wolk C.P."/>
            <person name="Kuritz T."/>
            <person name="Sasamoto S."/>
            <person name="Watanabe A."/>
            <person name="Iriguchi M."/>
            <person name="Ishikawa A."/>
            <person name="Kawashima K."/>
            <person name="Kimura T."/>
            <person name="Kishida Y."/>
            <person name="Kohara M."/>
            <person name="Matsumoto M."/>
            <person name="Matsuno A."/>
            <person name="Muraki A."/>
            <person name="Nakazaki N."/>
            <person name="Shimpo S."/>
            <person name="Sugimoto M."/>
            <person name="Takazawa M."/>
            <person name="Yamada M."/>
            <person name="Yasuda M."/>
            <person name="Tabata S."/>
        </authorList>
    </citation>
    <scope>NUCLEOTIDE SEQUENCE [LARGE SCALE GENOMIC DNA]</scope>
    <source>
        <strain>PCC 7120 / SAG 25.82 / UTEX 2576</strain>
    </source>
</reference>
<feature type="chain" id="PRO_0000067973" description="Glutathione reductase">
    <location>
        <begin position="1"/>
        <end position="459"/>
    </location>
</feature>
<feature type="active site" description="Proton acceptor" evidence="2">
    <location>
        <position position="448"/>
    </location>
</feature>
<feature type="binding site" evidence="2">
    <location>
        <position position="14"/>
    </location>
    <ligand>
        <name>FAD</name>
        <dbReference type="ChEBI" id="CHEBI:57692"/>
    </ligand>
</feature>
<feature type="binding site" evidence="1">
    <location>
        <position position="14"/>
    </location>
    <ligand>
        <name>glutathione</name>
        <dbReference type="ChEBI" id="CHEBI:57925"/>
    </ligand>
</feature>
<feature type="binding site" evidence="2">
    <location>
        <position position="15"/>
    </location>
    <ligand>
        <name>FAD</name>
        <dbReference type="ChEBI" id="CHEBI:57692"/>
    </ligand>
</feature>
<feature type="binding site" evidence="2">
    <location>
        <position position="34"/>
    </location>
    <ligand>
        <name>FAD</name>
        <dbReference type="ChEBI" id="CHEBI:57692"/>
    </ligand>
</feature>
<feature type="binding site" evidence="2">
    <location>
        <position position="41"/>
    </location>
    <ligand>
        <name>FAD</name>
        <dbReference type="ChEBI" id="CHEBI:57692"/>
    </ligand>
</feature>
<feature type="binding site" evidence="2">
    <location>
        <position position="42"/>
    </location>
    <ligand>
        <name>FAD</name>
        <dbReference type="ChEBI" id="CHEBI:57692"/>
    </ligand>
</feature>
<feature type="binding site" evidence="2">
    <location>
        <position position="50"/>
    </location>
    <ligand>
        <name>FAD</name>
        <dbReference type="ChEBI" id="CHEBI:57692"/>
    </ligand>
</feature>
<feature type="binding site" evidence="2">
    <location>
        <position position="114"/>
    </location>
    <ligand>
        <name>FAD</name>
        <dbReference type="ChEBI" id="CHEBI:57692"/>
    </ligand>
</feature>
<feature type="binding site" evidence="2">
    <location>
        <position position="177"/>
    </location>
    <ligand>
        <name>NADP(+)</name>
        <dbReference type="ChEBI" id="CHEBI:58349"/>
    </ligand>
</feature>
<feature type="binding site" evidence="2">
    <location>
        <position position="180"/>
    </location>
    <ligand>
        <name>NADP(+)</name>
        <dbReference type="ChEBI" id="CHEBI:58349"/>
    </ligand>
</feature>
<feature type="binding site" evidence="2">
    <location>
        <position position="197"/>
    </location>
    <ligand>
        <name>NADP(+)</name>
        <dbReference type="ChEBI" id="CHEBI:58349"/>
    </ligand>
</feature>
<feature type="binding site" evidence="2">
    <location>
        <position position="203"/>
    </location>
    <ligand>
        <name>NADP(+)</name>
        <dbReference type="ChEBI" id="CHEBI:58349"/>
    </ligand>
</feature>
<feature type="binding site" evidence="2">
    <location>
        <position position="262"/>
    </location>
    <ligand>
        <name>NADP(+)</name>
        <dbReference type="ChEBI" id="CHEBI:58349"/>
    </ligand>
</feature>
<feature type="binding site" evidence="2">
    <location>
        <position position="313"/>
    </location>
    <ligand>
        <name>FAD</name>
        <dbReference type="ChEBI" id="CHEBI:57692"/>
    </ligand>
</feature>
<feature type="binding site" evidence="2">
    <location>
        <position position="321"/>
    </location>
    <ligand>
        <name>FAD</name>
        <dbReference type="ChEBI" id="CHEBI:57692"/>
    </ligand>
</feature>
<feature type="binding site" evidence="1">
    <location>
        <position position="329"/>
    </location>
    <ligand>
        <name>glutathione</name>
        <dbReference type="ChEBI" id="CHEBI:57925"/>
    </ligand>
</feature>
<feature type="binding site" evidence="2">
    <location>
        <position position="351"/>
    </location>
    <ligand>
        <name>NADP(+)</name>
        <dbReference type="ChEBI" id="CHEBI:58349"/>
    </ligand>
</feature>
<feature type="binding site" evidence="2">
    <location>
        <position position="448"/>
    </location>
    <ligand>
        <name>FAD</name>
        <dbReference type="ChEBI" id="CHEBI:57692"/>
    </ligand>
</feature>
<feature type="disulfide bond" description="Redox-active" evidence="2">
    <location>
        <begin position="42"/>
        <end position="47"/>
    </location>
</feature>
<feature type="sequence conflict" description="In Ref. 1; CAA61856." evidence="3" ref="1">
    <original>E</original>
    <variation>Q</variation>
    <location>
        <position position="234"/>
    </location>
</feature>
<feature type="sequence conflict" description="In Ref. 1; CAA61856." evidence="3" ref="1">
    <original>R</original>
    <variation>L</variation>
    <location>
        <position position="340"/>
    </location>
</feature>
<feature type="sequence conflict" description="In Ref. 1; CAA61856." evidence="3" ref="1">
    <original>V</original>
    <variation>L</variation>
    <location>
        <position position="361"/>
    </location>
</feature>
<feature type="sequence conflict" description="In Ref. 1; CAA61856." evidence="3" ref="1">
    <original>L</original>
    <variation>H</variation>
    <location>
        <position position="372"/>
    </location>
</feature>
<feature type="sequence conflict" description="In Ref. 1; CAA61856." evidence="3" ref="1">
    <original>RTR</original>
    <variation>AP</variation>
    <location>
        <begin position="381"/>
        <end position="383"/>
    </location>
</feature>
<sequence length="459" mass="49478">MTFDYDLFVIGAGSGGLAASKRAASYGAKVAIAENDLVGGTCVIRGCVPKKLMVYGSHFPALFEDAAGYGWQVGKAELNWEHFITSIDKEVRRLSQLHISFLEKAGVELISGRATLVDNHTVEVGERKFTADKILIAVGGRPIKPELPGMEYGITSNEIFHLKTQPKHIAIIGSGYIGTEFAGIMRGLGSQVTQITRGDKILKGFDEDIRTEIQEGMTNHGIRIIPKNVVTAIEQVPEGLKISLSGEDQEPIIADVFLVATGRVPNVDGLGLENAGVDVVDSSIEGPGYSTMNAIAVNEYSQTSQPNIYAVGDVTDRLNLTPVAIGEGRAFADSEFGNNRREFSHETIATAVFSNPQASTVGLTEAEARAKLGDDAVTIYRTRFRPMYHSFTGKQERIMMKLVVDTKTDKVLGAHMVGENAAEIIQGVAIAVKMGATKKDFDATVGIHPSSAEEFVTMR</sequence>
<comment type="function">
    <text evidence="2">Catalyzes the reduction of glutathione disulfide (GSSG) to reduced glutathione (GSH). Constitutes the major mechanism to maintain a high GSH:GSSG ratio in the cytosol.</text>
</comment>
<comment type="catalytic activity">
    <reaction evidence="2">
        <text>2 glutathione + NADP(+) = glutathione disulfide + NADPH + H(+)</text>
        <dbReference type="Rhea" id="RHEA:11740"/>
        <dbReference type="ChEBI" id="CHEBI:15378"/>
        <dbReference type="ChEBI" id="CHEBI:57783"/>
        <dbReference type="ChEBI" id="CHEBI:57925"/>
        <dbReference type="ChEBI" id="CHEBI:58297"/>
        <dbReference type="ChEBI" id="CHEBI:58349"/>
        <dbReference type="EC" id="1.8.1.7"/>
    </reaction>
</comment>
<comment type="cofactor">
    <cofactor evidence="2">
        <name>FAD</name>
        <dbReference type="ChEBI" id="CHEBI:57692"/>
    </cofactor>
    <text evidence="2">Binds 1 FAD per subunit.</text>
</comment>
<comment type="subunit">
    <text evidence="2">Homodimer.</text>
</comment>
<comment type="subcellular location">
    <subcellularLocation>
        <location evidence="2">Cytoplasm</location>
    </subcellularLocation>
</comment>
<comment type="miscellaneous">
    <text evidence="2">The active site is a redox-active disulfide bond.</text>
</comment>
<comment type="similarity">
    <text evidence="3">Belongs to the class-I pyridine nucleotide-disulfide oxidoreductase family.</text>
</comment>
<proteinExistence type="inferred from homology"/>
<protein>
    <recommendedName>
        <fullName>Glutathione reductase</fullName>
        <shortName>GR</shortName>
        <shortName>GRase</shortName>
        <ecNumber>1.8.1.7</ecNumber>
    </recommendedName>
</protein>
<dbReference type="EC" id="1.8.1.7"/>
<dbReference type="EMBL" id="X89712">
    <property type="protein sequence ID" value="CAA61856.1"/>
    <property type="molecule type" value="Genomic_DNA"/>
</dbReference>
<dbReference type="EMBL" id="BA000019">
    <property type="protein sequence ID" value="BAB76667.1"/>
    <property type="molecule type" value="Genomic_DNA"/>
</dbReference>
<dbReference type="PIR" id="AH2426">
    <property type="entry name" value="AH2426"/>
</dbReference>
<dbReference type="PIR" id="I39477">
    <property type="entry name" value="I39477"/>
</dbReference>
<dbReference type="RefSeq" id="WP_010999094.1">
    <property type="nucleotide sequence ID" value="NZ_RSCN01000018.1"/>
</dbReference>
<dbReference type="SMR" id="P48638"/>
<dbReference type="STRING" id="103690.gene:10497023"/>
<dbReference type="KEGG" id="ana:all4968"/>
<dbReference type="eggNOG" id="COG1249">
    <property type="taxonomic scope" value="Bacteria"/>
</dbReference>
<dbReference type="OrthoDB" id="9800167at2"/>
<dbReference type="Proteomes" id="UP000002483">
    <property type="component" value="Chromosome"/>
</dbReference>
<dbReference type="GO" id="GO:0005829">
    <property type="term" value="C:cytosol"/>
    <property type="evidence" value="ECO:0007669"/>
    <property type="project" value="TreeGrafter"/>
</dbReference>
<dbReference type="GO" id="GO:0050660">
    <property type="term" value="F:flavin adenine dinucleotide binding"/>
    <property type="evidence" value="ECO:0007669"/>
    <property type="project" value="InterPro"/>
</dbReference>
<dbReference type="GO" id="GO:0004362">
    <property type="term" value="F:glutathione-disulfide reductase (NADPH) activity"/>
    <property type="evidence" value="ECO:0007669"/>
    <property type="project" value="UniProtKB-EC"/>
</dbReference>
<dbReference type="GO" id="GO:0050661">
    <property type="term" value="F:NADP binding"/>
    <property type="evidence" value="ECO:0007669"/>
    <property type="project" value="InterPro"/>
</dbReference>
<dbReference type="GO" id="GO:0045454">
    <property type="term" value="P:cell redox homeostasis"/>
    <property type="evidence" value="ECO:0007669"/>
    <property type="project" value="InterPro"/>
</dbReference>
<dbReference type="GO" id="GO:0034599">
    <property type="term" value="P:cellular response to oxidative stress"/>
    <property type="evidence" value="ECO:0007669"/>
    <property type="project" value="TreeGrafter"/>
</dbReference>
<dbReference type="GO" id="GO:0006749">
    <property type="term" value="P:glutathione metabolic process"/>
    <property type="evidence" value="ECO:0007669"/>
    <property type="project" value="InterPro"/>
</dbReference>
<dbReference type="Gene3D" id="3.30.390.30">
    <property type="match status" value="1"/>
</dbReference>
<dbReference type="Gene3D" id="3.50.50.60">
    <property type="entry name" value="FAD/NAD(P)-binding domain"/>
    <property type="match status" value="2"/>
</dbReference>
<dbReference type="InterPro" id="IPR036188">
    <property type="entry name" value="FAD/NAD-bd_sf"/>
</dbReference>
<dbReference type="InterPro" id="IPR023753">
    <property type="entry name" value="FAD/NAD-binding_dom"/>
</dbReference>
<dbReference type="InterPro" id="IPR016156">
    <property type="entry name" value="FAD/NAD-linked_Rdtase_dimer_sf"/>
</dbReference>
<dbReference type="InterPro" id="IPR006324">
    <property type="entry name" value="GSHR"/>
</dbReference>
<dbReference type="InterPro" id="IPR046952">
    <property type="entry name" value="GSHR/TRXR-like"/>
</dbReference>
<dbReference type="InterPro" id="IPR001100">
    <property type="entry name" value="Pyr_nuc-diS_OxRdtase"/>
</dbReference>
<dbReference type="InterPro" id="IPR004099">
    <property type="entry name" value="Pyr_nucl-diS_OxRdtase_dimer"/>
</dbReference>
<dbReference type="InterPro" id="IPR012999">
    <property type="entry name" value="Pyr_OxRdtase_I_AS"/>
</dbReference>
<dbReference type="NCBIfam" id="TIGR01424">
    <property type="entry name" value="gluta_reduc_2"/>
    <property type="match status" value="1"/>
</dbReference>
<dbReference type="NCBIfam" id="NF004776">
    <property type="entry name" value="PRK06116.1"/>
    <property type="match status" value="1"/>
</dbReference>
<dbReference type="PANTHER" id="PTHR42737">
    <property type="entry name" value="GLUTATHIONE REDUCTASE"/>
    <property type="match status" value="1"/>
</dbReference>
<dbReference type="PANTHER" id="PTHR42737:SF2">
    <property type="entry name" value="GLUTATHIONE REDUCTASE"/>
    <property type="match status" value="1"/>
</dbReference>
<dbReference type="Pfam" id="PF07992">
    <property type="entry name" value="Pyr_redox_2"/>
    <property type="match status" value="1"/>
</dbReference>
<dbReference type="Pfam" id="PF02852">
    <property type="entry name" value="Pyr_redox_dim"/>
    <property type="match status" value="1"/>
</dbReference>
<dbReference type="PIRSF" id="PIRSF000350">
    <property type="entry name" value="Mercury_reductase_MerA"/>
    <property type="match status" value="1"/>
</dbReference>
<dbReference type="PRINTS" id="PR00368">
    <property type="entry name" value="FADPNR"/>
</dbReference>
<dbReference type="PRINTS" id="PR00411">
    <property type="entry name" value="PNDRDTASEI"/>
</dbReference>
<dbReference type="SUPFAM" id="SSF51905">
    <property type="entry name" value="FAD/NAD(P)-binding domain"/>
    <property type="match status" value="1"/>
</dbReference>
<dbReference type="SUPFAM" id="SSF55424">
    <property type="entry name" value="FAD/NAD-linked reductases, dimerisation (C-terminal) domain"/>
    <property type="match status" value="1"/>
</dbReference>
<dbReference type="PROSITE" id="PS00076">
    <property type="entry name" value="PYRIDINE_REDOX_1"/>
    <property type="match status" value="1"/>
</dbReference>
<name>GSHR_NOSS1</name>
<accession>P48638</accession>
<organism>
    <name type="scientific">Nostoc sp. (strain PCC 7120 / SAG 25.82 / UTEX 2576)</name>
    <dbReference type="NCBI Taxonomy" id="103690"/>
    <lineage>
        <taxon>Bacteria</taxon>
        <taxon>Bacillati</taxon>
        <taxon>Cyanobacteriota</taxon>
        <taxon>Cyanophyceae</taxon>
        <taxon>Nostocales</taxon>
        <taxon>Nostocaceae</taxon>
        <taxon>Nostoc</taxon>
    </lineage>
</organism>